<reference key="1">
    <citation type="journal article" date="2002" name="Lancet">
        <title>Genome and virulence determinants of high virulence community-acquired MRSA.</title>
        <authorList>
            <person name="Baba T."/>
            <person name="Takeuchi F."/>
            <person name="Kuroda M."/>
            <person name="Yuzawa H."/>
            <person name="Aoki K."/>
            <person name="Oguchi A."/>
            <person name="Nagai Y."/>
            <person name="Iwama N."/>
            <person name="Asano K."/>
            <person name="Naimi T."/>
            <person name="Kuroda H."/>
            <person name="Cui L."/>
            <person name="Yamamoto K."/>
            <person name="Hiramatsu K."/>
        </authorList>
    </citation>
    <scope>NUCLEOTIDE SEQUENCE [LARGE SCALE GENOMIC DNA]</scope>
    <source>
        <strain>MW2</strain>
    </source>
</reference>
<name>FTSK_STAAW</name>
<accession>Q8NWY8</accession>
<protein>
    <recommendedName>
        <fullName>DNA translocase FtsK</fullName>
    </recommendedName>
</protein>
<organism>
    <name type="scientific">Staphylococcus aureus (strain MW2)</name>
    <dbReference type="NCBI Taxonomy" id="196620"/>
    <lineage>
        <taxon>Bacteria</taxon>
        <taxon>Bacillati</taxon>
        <taxon>Bacillota</taxon>
        <taxon>Bacilli</taxon>
        <taxon>Bacillales</taxon>
        <taxon>Staphylococcaceae</taxon>
        <taxon>Staphylococcus</taxon>
    </lineage>
</organism>
<proteinExistence type="inferred from homology"/>
<feature type="chain" id="PRO_0000098298" description="DNA translocase FtsK">
    <location>
        <begin position="1"/>
        <end position="789"/>
    </location>
</feature>
<feature type="transmembrane region" description="Helical" evidence="2">
    <location>
        <begin position="34"/>
        <end position="54"/>
    </location>
</feature>
<feature type="transmembrane region" description="Helical" evidence="2">
    <location>
        <begin position="63"/>
        <end position="83"/>
    </location>
</feature>
<feature type="transmembrane region" description="Helical" evidence="2">
    <location>
        <begin position="99"/>
        <end position="119"/>
    </location>
</feature>
<feature type="transmembrane region" description="Helical" evidence="2">
    <location>
        <begin position="137"/>
        <end position="157"/>
    </location>
</feature>
<feature type="transmembrane region" description="Helical" evidence="2">
    <location>
        <begin position="158"/>
        <end position="178"/>
    </location>
</feature>
<feature type="topological domain" description="Cytoplasmic" evidence="2">
    <location>
        <begin position="179"/>
        <end position="789"/>
    </location>
</feature>
<feature type="domain" description="FtsK" evidence="3">
    <location>
        <begin position="454"/>
        <end position="650"/>
    </location>
</feature>
<feature type="region of interest" description="Disordered" evidence="4">
    <location>
        <begin position="1"/>
        <end position="25"/>
    </location>
</feature>
<feature type="region of interest" description="Disordered" evidence="4">
    <location>
        <begin position="209"/>
        <end position="275"/>
    </location>
</feature>
<feature type="compositionally biased region" description="Basic and acidic residues" evidence="4">
    <location>
        <begin position="209"/>
        <end position="231"/>
    </location>
</feature>
<feature type="compositionally biased region" description="Basic and acidic residues" evidence="4">
    <location>
        <begin position="247"/>
        <end position="262"/>
    </location>
</feature>
<feature type="binding site" evidence="3">
    <location>
        <begin position="474"/>
        <end position="479"/>
    </location>
    <ligand>
        <name>ATP</name>
        <dbReference type="ChEBI" id="CHEBI:30616"/>
    </ligand>
</feature>
<dbReference type="EMBL" id="BA000033">
    <property type="protein sequence ID" value="BAB95024.1"/>
    <property type="molecule type" value="Genomic_DNA"/>
</dbReference>
<dbReference type="RefSeq" id="WP_000035773.1">
    <property type="nucleotide sequence ID" value="NC_003923.1"/>
</dbReference>
<dbReference type="SMR" id="Q8NWY8"/>
<dbReference type="KEGG" id="sam:MW1159"/>
<dbReference type="HOGENOM" id="CLU_001981_9_2_9"/>
<dbReference type="GO" id="GO:0005886">
    <property type="term" value="C:plasma membrane"/>
    <property type="evidence" value="ECO:0007669"/>
    <property type="project" value="UniProtKB-SubCell"/>
</dbReference>
<dbReference type="GO" id="GO:0005524">
    <property type="term" value="F:ATP binding"/>
    <property type="evidence" value="ECO:0007669"/>
    <property type="project" value="UniProtKB-KW"/>
</dbReference>
<dbReference type="GO" id="GO:0016887">
    <property type="term" value="F:ATP hydrolysis activity"/>
    <property type="evidence" value="ECO:0007669"/>
    <property type="project" value="InterPro"/>
</dbReference>
<dbReference type="GO" id="GO:0003677">
    <property type="term" value="F:DNA binding"/>
    <property type="evidence" value="ECO:0007669"/>
    <property type="project" value="UniProtKB-KW"/>
</dbReference>
<dbReference type="GO" id="GO:0051301">
    <property type="term" value="P:cell division"/>
    <property type="evidence" value="ECO:0007669"/>
    <property type="project" value="UniProtKB-KW"/>
</dbReference>
<dbReference type="GO" id="GO:0007059">
    <property type="term" value="P:chromosome segregation"/>
    <property type="evidence" value="ECO:0007669"/>
    <property type="project" value="UniProtKB-KW"/>
</dbReference>
<dbReference type="CDD" id="cd01127">
    <property type="entry name" value="TrwB_TraG_TraD_VirD4"/>
    <property type="match status" value="1"/>
</dbReference>
<dbReference type="Gene3D" id="3.30.980.40">
    <property type="match status" value="1"/>
</dbReference>
<dbReference type="Gene3D" id="3.40.50.300">
    <property type="entry name" value="P-loop containing nucleotide triphosphate hydrolases"/>
    <property type="match status" value="1"/>
</dbReference>
<dbReference type="Gene3D" id="1.10.10.10">
    <property type="entry name" value="Winged helix-like DNA-binding domain superfamily/Winged helix DNA-binding domain"/>
    <property type="match status" value="1"/>
</dbReference>
<dbReference type="InterPro" id="IPR003593">
    <property type="entry name" value="AAA+_ATPase"/>
</dbReference>
<dbReference type="InterPro" id="IPR050206">
    <property type="entry name" value="FtsK/SpoIIIE/SftA"/>
</dbReference>
<dbReference type="InterPro" id="IPR041027">
    <property type="entry name" value="FtsK_alpha"/>
</dbReference>
<dbReference type="InterPro" id="IPR002543">
    <property type="entry name" value="FtsK_dom"/>
</dbReference>
<dbReference type="InterPro" id="IPR018541">
    <property type="entry name" value="Ftsk_gamma"/>
</dbReference>
<dbReference type="InterPro" id="IPR027417">
    <property type="entry name" value="P-loop_NTPase"/>
</dbReference>
<dbReference type="InterPro" id="IPR036388">
    <property type="entry name" value="WH-like_DNA-bd_sf"/>
</dbReference>
<dbReference type="InterPro" id="IPR036390">
    <property type="entry name" value="WH_DNA-bd_sf"/>
</dbReference>
<dbReference type="PANTHER" id="PTHR22683:SF41">
    <property type="entry name" value="DNA TRANSLOCASE FTSK"/>
    <property type="match status" value="1"/>
</dbReference>
<dbReference type="PANTHER" id="PTHR22683">
    <property type="entry name" value="SPORULATION PROTEIN RELATED"/>
    <property type="match status" value="1"/>
</dbReference>
<dbReference type="Pfam" id="PF17854">
    <property type="entry name" value="FtsK_alpha"/>
    <property type="match status" value="1"/>
</dbReference>
<dbReference type="Pfam" id="PF09397">
    <property type="entry name" value="FtsK_gamma"/>
    <property type="match status" value="1"/>
</dbReference>
<dbReference type="Pfam" id="PF01580">
    <property type="entry name" value="FtsK_SpoIIIE"/>
    <property type="match status" value="1"/>
</dbReference>
<dbReference type="SMART" id="SM00382">
    <property type="entry name" value="AAA"/>
    <property type="match status" value="1"/>
</dbReference>
<dbReference type="SMART" id="SM00843">
    <property type="entry name" value="Ftsk_gamma"/>
    <property type="match status" value="1"/>
</dbReference>
<dbReference type="SUPFAM" id="SSF52540">
    <property type="entry name" value="P-loop containing nucleoside triphosphate hydrolases"/>
    <property type="match status" value="1"/>
</dbReference>
<dbReference type="SUPFAM" id="SSF46785">
    <property type="entry name" value="Winged helix' DNA-binding domain"/>
    <property type="match status" value="1"/>
</dbReference>
<dbReference type="PROSITE" id="PS50901">
    <property type="entry name" value="FTSK"/>
    <property type="match status" value="1"/>
</dbReference>
<sequence>MAQAKKKSTAKKKTTSKKRTNSRKKKNDNPIRYVIAILVVVLMVLGVFQLGIIGRLIDSFFNYLFGYSRYLTYILVLLATGFITYSKRIPKTRRTAGSIVLQIALLFVSQLVFHFNSGIKAEREPVLSYVYQSYQHSHFPNFGGGVLGFYLLELSVPLISLFGVCIITILLLCSSVILLTNHQHREVAKVVLENIKAWFGSFNEKMSERNQEKQLKREEKARLKEEQKARQNEQPQIKDVSDFTEVPQERDIPIYGHTENESKSQSQPSRKKRVFDAENSSNNIVNHHQADQQEQLTEQTHNSVESENTIEEAGEVTNVSYVVPPLTLLNQPAKQKATSKAEVQRKGQVLENTLKDFGVNAKVTQIKIGPAVTQYEIQPAQGVKVSKIVNLHNDIALALAAKDVRIEAPIPGRSAVGIEVPNEKISLVSLKEVLDEKFPSNNKLEVGLGRDISGDPITVPLNEMPHLLVAGSTGSGKSVCINGIITSILLNAKPHEVKLMLIDPKMVELNVYNGIPHLLIPVVTNPHKAAQALEKIVAEMERRYDLFQHSSTRNIKGYNELIRKQNQELDEKQPELPYIVVIVDELADLMMVAGKEVENAIQRITQMARAAGIHLIVATQRPSVDVITGIIKNNIPSRIAFAVSSQTDSRTIIGTGGAEKLLGKGDMLYVGNGDSSQTRIQGAFLSDQEVQDVVNYVVEQQQANYVKEMEPDAPVDKSEMKSEDALYDEAYLFVVEQQKASTSLLQRQFRIGYNRASRLMDDLERNQVIGPQKGSKPRQVLIDLNNDEV</sequence>
<comment type="function">
    <text evidence="1">Essential cell division protein that coordinates cell division and chromosome segregation. The N-terminus is involved in assembly of the cell-division machinery. The C-terminus functions as a DNA motor that moves dsDNA in an ATP-dependent manner towards the dif recombination site, which is located within the replication terminus region. Required for activation of the Xer recombinase, allowing activation of chromosome unlinking by recombination (By similarity).</text>
</comment>
<comment type="subunit">
    <text evidence="1">Homohexamer. Forms a ring that surrounds DNA (By similarity).</text>
</comment>
<comment type="subcellular location">
    <subcellularLocation>
        <location evidence="1">Cell membrane</location>
        <topology evidence="1">Multi-pass membrane protein</topology>
    </subcellularLocation>
    <text evidence="1">Located at the septum.</text>
</comment>
<comment type="domain">
    <text evidence="1">Consists of an N-terminal domain, which is sufficient for the localization to the septal ring and is required for cell division, followed by a linker domain, and a C-terminal domain, which forms the translocation motor involved in chromosome segregation. The C-terminal domain can be further subdivided into alpha, beta and gamma subdomains. The alpha and beta subdomains form the DNA pump, and the gamma subdomain is a regulatory subdomain (By similarity).</text>
</comment>
<comment type="similarity">
    <text evidence="5">Belongs to the FtsK/SpoIIIE/SftA family.</text>
</comment>
<keyword id="KW-0067">ATP-binding</keyword>
<keyword id="KW-0131">Cell cycle</keyword>
<keyword id="KW-0132">Cell division</keyword>
<keyword id="KW-1003">Cell membrane</keyword>
<keyword id="KW-0159">Chromosome partition</keyword>
<keyword id="KW-0238">DNA-binding</keyword>
<keyword id="KW-0472">Membrane</keyword>
<keyword id="KW-0547">Nucleotide-binding</keyword>
<keyword id="KW-0812">Transmembrane</keyword>
<keyword id="KW-1133">Transmembrane helix</keyword>
<gene>
    <name type="primary">ftsK</name>
    <name type="ordered locus">MW1159</name>
</gene>
<evidence type="ECO:0000250" key="1"/>
<evidence type="ECO:0000255" key="2"/>
<evidence type="ECO:0000255" key="3">
    <source>
        <dbReference type="PROSITE-ProRule" id="PRU00289"/>
    </source>
</evidence>
<evidence type="ECO:0000256" key="4">
    <source>
        <dbReference type="SAM" id="MobiDB-lite"/>
    </source>
</evidence>
<evidence type="ECO:0000305" key="5"/>